<protein>
    <recommendedName>
        <fullName evidence="1">Ribosomal protein L11 methyltransferase</fullName>
        <shortName evidence="1">L11 Mtase</shortName>
        <ecNumber evidence="1">2.1.1.-</ecNumber>
    </recommendedName>
</protein>
<organism>
    <name type="scientific">Streptococcus pneumoniae (strain P1031)</name>
    <dbReference type="NCBI Taxonomy" id="488223"/>
    <lineage>
        <taxon>Bacteria</taxon>
        <taxon>Bacillati</taxon>
        <taxon>Bacillota</taxon>
        <taxon>Bacilli</taxon>
        <taxon>Lactobacillales</taxon>
        <taxon>Streptococcaceae</taxon>
        <taxon>Streptococcus</taxon>
    </lineage>
</organism>
<feature type="chain" id="PRO_1000148145" description="Ribosomal protein L11 methyltransferase">
    <location>
        <begin position="1"/>
        <end position="316"/>
    </location>
</feature>
<feature type="binding site" evidence="1">
    <location>
        <position position="157"/>
    </location>
    <ligand>
        <name>S-adenosyl-L-methionine</name>
        <dbReference type="ChEBI" id="CHEBI:59789"/>
    </ligand>
</feature>
<feature type="binding site" evidence="1">
    <location>
        <position position="178"/>
    </location>
    <ligand>
        <name>S-adenosyl-L-methionine</name>
        <dbReference type="ChEBI" id="CHEBI:59789"/>
    </ligand>
</feature>
<feature type="binding site" evidence="1">
    <location>
        <position position="200"/>
    </location>
    <ligand>
        <name>S-adenosyl-L-methionine</name>
        <dbReference type="ChEBI" id="CHEBI:59789"/>
    </ligand>
</feature>
<feature type="binding site" evidence="1">
    <location>
        <position position="243"/>
    </location>
    <ligand>
        <name>S-adenosyl-L-methionine</name>
        <dbReference type="ChEBI" id="CHEBI:59789"/>
    </ligand>
</feature>
<sequence length="316" mass="34795">METWQELKVTVKREGEELVSNLLIELGAQGVAIEDSMDYVGNVDRFGEIFPEVEQQEEIVVTAYYPDTVDVTVVEADLQARISELTDFMDLGELKIGTTALAEEDWADNWKKYYEPARITHDLTIVPSWTDYEATAGEKIIKLDPGMAFGTGTHPTTKMSIFALEQVLRGGETVLDVGTGSGVLSIASSLLGAKEIFAYDLDDVAVRVAQENIELNPGMENIHVAAGDLLKGVEIEADVIVANILADILIHLTEDAYRLVKDEGYLIMSGIIKDKWDMVRELAESAGFFLETHMVQGEWNACVFKKTKDISGVIGG</sequence>
<keyword id="KW-0963">Cytoplasm</keyword>
<keyword id="KW-0489">Methyltransferase</keyword>
<keyword id="KW-0949">S-adenosyl-L-methionine</keyword>
<keyword id="KW-0808">Transferase</keyword>
<dbReference type="EC" id="2.1.1.-" evidence="1"/>
<dbReference type="EMBL" id="CP000920">
    <property type="protein sequence ID" value="ACO21549.1"/>
    <property type="molecule type" value="Genomic_DNA"/>
</dbReference>
<dbReference type="RefSeq" id="WP_000451146.1">
    <property type="nucleotide sequence ID" value="NC_012467.1"/>
</dbReference>
<dbReference type="SMR" id="C1CMA0"/>
<dbReference type="KEGG" id="spp:SPP_1784"/>
<dbReference type="HOGENOM" id="CLU_049382_0_1_9"/>
<dbReference type="GO" id="GO:0005737">
    <property type="term" value="C:cytoplasm"/>
    <property type="evidence" value="ECO:0007669"/>
    <property type="project" value="UniProtKB-SubCell"/>
</dbReference>
<dbReference type="GO" id="GO:0016279">
    <property type="term" value="F:protein-lysine N-methyltransferase activity"/>
    <property type="evidence" value="ECO:0007669"/>
    <property type="project" value="RHEA"/>
</dbReference>
<dbReference type="GO" id="GO:0032259">
    <property type="term" value="P:methylation"/>
    <property type="evidence" value="ECO:0007669"/>
    <property type="project" value="UniProtKB-KW"/>
</dbReference>
<dbReference type="CDD" id="cd02440">
    <property type="entry name" value="AdoMet_MTases"/>
    <property type="match status" value="1"/>
</dbReference>
<dbReference type="Gene3D" id="3.40.50.150">
    <property type="entry name" value="Vaccinia Virus protein VP39"/>
    <property type="match status" value="1"/>
</dbReference>
<dbReference type="HAMAP" id="MF_00735">
    <property type="entry name" value="Methyltr_PrmA"/>
    <property type="match status" value="1"/>
</dbReference>
<dbReference type="InterPro" id="IPR050078">
    <property type="entry name" value="Ribosomal_L11_MeTrfase_PrmA"/>
</dbReference>
<dbReference type="InterPro" id="IPR004498">
    <property type="entry name" value="Ribosomal_PrmA_MeTrfase"/>
</dbReference>
<dbReference type="InterPro" id="IPR029063">
    <property type="entry name" value="SAM-dependent_MTases_sf"/>
</dbReference>
<dbReference type="NCBIfam" id="TIGR00406">
    <property type="entry name" value="prmA"/>
    <property type="match status" value="1"/>
</dbReference>
<dbReference type="PANTHER" id="PTHR43648">
    <property type="entry name" value="ELECTRON TRANSFER FLAVOPROTEIN BETA SUBUNIT LYSINE METHYLTRANSFERASE"/>
    <property type="match status" value="1"/>
</dbReference>
<dbReference type="PANTHER" id="PTHR43648:SF1">
    <property type="entry name" value="ELECTRON TRANSFER FLAVOPROTEIN BETA SUBUNIT LYSINE METHYLTRANSFERASE"/>
    <property type="match status" value="1"/>
</dbReference>
<dbReference type="Pfam" id="PF06325">
    <property type="entry name" value="PrmA"/>
    <property type="match status" value="1"/>
</dbReference>
<dbReference type="PIRSF" id="PIRSF000401">
    <property type="entry name" value="RPL11_MTase"/>
    <property type="match status" value="1"/>
</dbReference>
<dbReference type="SUPFAM" id="SSF53335">
    <property type="entry name" value="S-adenosyl-L-methionine-dependent methyltransferases"/>
    <property type="match status" value="1"/>
</dbReference>
<evidence type="ECO:0000255" key="1">
    <source>
        <dbReference type="HAMAP-Rule" id="MF_00735"/>
    </source>
</evidence>
<comment type="function">
    <text evidence="1">Methylates ribosomal protein L11.</text>
</comment>
<comment type="catalytic activity">
    <reaction evidence="1">
        <text>L-lysyl-[protein] + 3 S-adenosyl-L-methionine = N(6),N(6),N(6)-trimethyl-L-lysyl-[protein] + 3 S-adenosyl-L-homocysteine + 3 H(+)</text>
        <dbReference type="Rhea" id="RHEA:54192"/>
        <dbReference type="Rhea" id="RHEA-COMP:9752"/>
        <dbReference type="Rhea" id="RHEA-COMP:13826"/>
        <dbReference type="ChEBI" id="CHEBI:15378"/>
        <dbReference type="ChEBI" id="CHEBI:29969"/>
        <dbReference type="ChEBI" id="CHEBI:57856"/>
        <dbReference type="ChEBI" id="CHEBI:59789"/>
        <dbReference type="ChEBI" id="CHEBI:61961"/>
    </reaction>
</comment>
<comment type="subcellular location">
    <subcellularLocation>
        <location evidence="1">Cytoplasm</location>
    </subcellularLocation>
</comment>
<comment type="similarity">
    <text evidence="1">Belongs to the methyltransferase superfamily. PrmA family.</text>
</comment>
<gene>
    <name evidence="1" type="primary">prmA</name>
    <name type="ordered locus">SPP_1784</name>
</gene>
<reference key="1">
    <citation type="journal article" date="2010" name="Genome Biol.">
        <title>Structure and dynamics of the pan-genome of Streptococcus pneumoniae and closely related species.</title>
        <authorList>
            <person name="Donati C."/>
            <person name="Hiller N.L."/>
            <person name="Tettelin H."/>
            <person name="Muzzi A."/>
            <person name="Croucher N.J."/>
            <person name="Angiuoli S.V."/>
            <person name="Oggioni M."/>
            <person name="Dunning Hotopp J.C."/>
            <person name="Hu F.Z."/>
            <person name="Riley D.R."/>
            <person name="Covacci A."/>
            <person name="Mitchell T.J."/>
            <person name="Bentley S.D."/>
            <person name="Kilian M."/>
            <person name="Ehrlich G.D."/>
            <person name="Rappuoli R."/>
            <person name="Moxon E.R."/>
            <person name="Masignani V."/>
        </authorList>
    </citation>
    <scope>NUCLEOTIDE SEQUENCE [LARGE SCALE GENOMIC DNA]</scope>
    <source>
        <strain>P1031</strain>
    </source>
</reference>
<proteinExistence type="inferred from homology"/>
<name>PRMA_STRZP</name>
<accession>C1CMA0</accession>